<comment type="function">
    <text evidence="1">Type-I myosin implicated in the organization of the actin cytoskeleton. Required for proper actin cytoskeleton polarization. At the cell cortex, assembles in patch-like structures together with proteins from the actin-polymerizing machinery and promotes actin assembly. Functions as actin nucleation-promoting factor (NPF) for the Arp2/3 complex (By similarity).</text>
</comment>
<comment type="subcellular location">
    <subcellularLocation>
        <location evidence="1">Cytoplasm</location>
        <location evidence="1">Cytoskeleton</location>
        <location evidence="1">Actin patch</location>
    </subcellularLocation>
</comment>
<comment type="domain">
    <text evidence="1">The myosin motor domain displays actin-stimulated ATPase activity and generates a mechanochemical force.</text>
</comment>
<comment type="domain">
    <text evidence="1">The tail domain participates in molecular interactions that specify the role of the motor domain (By similarity). It is composed of several tail homology (TH) domains, namely a putative phospholipid-binding myosin tail domain (also named TH1), an Ala- and Pro-rich domain (TH2), followed by an SH3 domain and a C-terminal acidic domain (TH3).</text>
</comment>
<comment type="PTM">
    <text evidence="1">Phosphorylation of the TEDS site (Ser-364) is required for the polarization of the actin cytoskeleton. Phosphorylation probably activates the myosin-I ATPase activity (By similarity).</text>
</comment>
<comment type="similarity">
    <text evidence="7">Belongs to the TRAFAC class myosin-kinesin ATPase superfamily. Myosin family.</text>
</comment>
<feature type="chain" id="PRO_0000338550" description="Myosin-1">
    <location>
        <begin position="1"/>
        <end position="1304"/>
    </location>
</feature>
<feature type="domain" description="Myosin motor" evidence="4">
    <location>
        <begin position="36"/>
        <end position="730"/>
    </location>
</feature>
<feature type="domain" description="IQ 1">
    <location>
        <begin position="734"/>
        <end position="754"/>
    </location>
</feature>
<feature type="domain" description="IQ 2">
    <location>
        <begin position="755"/>
        <end position="780"/>
    </location>
</feature>
<feature type="domain" description="TH1" evidence="5">
    <location>
        <begin position="788"/>
        <end position="978"/>
    </location>
</feature>
<feature type="domain" description="SH3" evidence="3">
    <location>
        <begin position="1155"/>
        <end position="1217"/>
    </location>
</feature>
<feature type="region of interest" description="Disordered" evidence="6">
    <location>
        <begin position="1"/>
        <end position="24"/>
    </location>
</feature>
<feature type="region of interest" description="Actin-binding" evidence="1">
    <location>
        <begin position="413"/>
        <end position="496"/>
    </location>
</feature>
<feature type="region of interest" description="Disordered" evidence="6">
    <location>
        <begin position="963"/>
        <end position="1162"/>
    </location>
</feature>
<feature type="region of interest" description="Disordered" evidence="6">
    <location>
        <begin position="1214"/>
        <end position="1304"/>
    </location>
</feature>
<feature type="compositionally biased region" description="Basic residues" evidence="6">
    <location>
        <begin position="1"/>
        <end position="12"/>
    </location>
</feature>
<feature type="compositionally biased region" description="Polar residues" evidence="6">
    <location>
        <begin position="964"/>
        <end position="983"/>
    </location>
</feature>
<feature type="compositionally biased region" description="Polar residues" evidence="6">
    <location>
        <begin position="1001"/>
        <end position="1012"/>
    </location>
</feature>
<feature type="compositionally biased region" description="Low complexity" evidence="6">
    <location>
        <begin position="1029"/>
        <end position="1052"/>
    </location>
</feature>
<feature type="compositionally biased region" description="Low complexity" evidence="6">
    <location>
        <begin position="1072"/>
        <end position="1096"/>
    </location>
</feature>
<feature type="compositionally biased region" description="Low complexity" evidence="6">
    <location>
        <begin position="1120"/>
        <end position="1140"/>
    </location>
</feature>
<feature type="compositionally biased region" description="Pro residues" evidence="6">
    <location>
        <begin position="1141"/>
        <end position="1156"/>
    </location>
</feature>
<feature type="compositionally biased region" description="Low complexity" evidence="6">
    <location>
        <begin position="1217"/>
        <end position="1227"/>
    </location>
</feature>
<feature type="compositionally biased region" description="Low complexity" evidence="6">
    <location>
        <begin position="1236"/>
        <end position="1256"/>
    </location>
</feature>
<feature type="compositionally biased region" description="Acidic residues" evidence="6">
    <location>
        <begin position="1292"/>
        <end position="1304"/>
    </location>
</feature>
<feature type="binding site" evidence="2">
    <location>
        <begin position="129"/>
        <end position="136"/>
    </location>
    <ligand>
        <name>ATP</name>
        <dbReference type="ChEBI" id="CHEBI:30616"/>
    </ligand>
</feature>
<feature type="modified residue" description="Phosphoserine" evidence="1">
    <location>
        <position position="364"/>
    </location>
</feature>
<evidence type="ECO:0000250" key="1"/>
<evidence type="ECO:0000255" key="2"/>
<evidence type="ECO:0000255" key="3">
    <source>
        <dbReference type="PROSITE-ProRule" id="PRU00192"/>
    </source>
</evidence>
<evidence type="ECO:0000255" key="4">
    <source>
        <dbReference type="PROSITE-ProRule" id="PRU00782"/>
    </source>
</evidence>
<evidence type="ECO:0000255" key="5">
    <source>
        <dbReference type="PROSITE-ProRule" id="PRU01093"/>
    </source>
</evidence>
<evidence type="ECO:0000256" key="6">
    <source>
        <dbReference type="SAM" id="MobiDB-lite"/>
    </source>
</evidence>
<evidence type="ECO:0000305" key="7"/>
<reference key="1">
    <citation type="journal article" date="2004" name="Nature">
        <title>Genome evolution in yeasts.</title>
        <authorList>
            <person name="Dujon B."/>
            <person name="Sherman D."/>
            <person name="Fischer G."/>
            <person name="Durrens P."/>
            <person name="Casaregola S."/>
            <person name="Lafontaine I."/>
            <person name="de Montigny J."/>
            <person name="Marck C."/>
            <person name="Neuveglise C."/>
            <person name="Talla E."/>
            <person name="Goffard N."/>
            <person name="Frangeul L."/>
            <person name="Aigle M."/>
            <person name="Anthouard V."/>
            <person name="Babour A."/>
            <person name="Barbe V."/>
            <person name="Barnay S."/>
            <person name="Blanchin S."/>
            <person name="Beckerich J.-M."/>
            <person name="Beyne E."/>
            <person name="Bleykasten C."/>
            <person name="Boisrame A."/>
            <person name="Boyer J."/>
            <person name="Cattolico L."/>
            <person name="Confanioleri F."/>
            <person name="de Daruvar A."/>
            <person name="Despons L."/>
            <person name="Fabre E."/>
            <person name="Fairhead C."/>
            <person name="Ferry-Dumazet H."/>
            <person name="Groppi A."/>
            <person name="Hantraye F."/>
            <person name="Hennequin C."/>
            <person name="Jauniaux N."/>
            <person name="Joyet P."/>
            <person name="Kachouri R."/>
            <person name="Kerrest A."/>
            <person name="Koszul R."/>
            <person name="Lemaire M."/>
            <person name="Lesur I."/>
            <person name="Ma L."/>
            <person name="Muller H."/>
            <person name="Nicaud J.-M."/>
            <person name="Nikolski M."/>
            <person name="Oztas S."/>
            <person name="Ozier-Kalogeropoulos O."/>
            <person name="Pellenz S."/>
            <person name="Potier S."/>
            <person name="Richard G.-F."/>
            <person name="Straub M.-L."/>
            <person name="Suleau A."/>
            <person name="Swennen D."/>
            <person name="Tekaia F."/>
            <person name="Wesolowski-Louvel M."/>
            <person name="Westhof E."/>
            <person name="Wirth B."/>
            <person name="Zeniou-Meyer M."/>
            <person name="Zivanovic Y."/>
            <person name="Bolotin-Fukuhara M."/>
            <person name="Thierry A."/>
            <person name="Bouchier C."/>
            <person name="Caudron B."/>
            <person name="Scarpelli C."/>
            <person name="Gaillardin C."/>
            <person name="Weissenbach J."/>
            <person name="Wincker P."/>
            <person name="Souciet J.-L."/>
        </authorList>
    </citation>
    <scope>NUCLEOTIDE SEQUENCE [LARGE SCALE GENOMIC DNA]</scope>
    <source>
        <strain>ATCC 36239 / CBS 767 / BCRC 21394 / JCM 1990 / NBRC 0083 / IGC 2968</strain>
    </source>
</reference>
<name>MYO1_DEBHA</name>
<proteinExistence type="inferred from homology"/>
<dbReference type="EMBL" id="CR382135">
    <property type="protein sequence ID" value="CAG86138.2"/>
    <property type="molecule type" value="Genomic_DNA"/>
</dbReference>
<dbReference type="RefSeq" id="XP_458067.2">
    <property type="nucleotide sequence ID" value="XM_458067.1"/>
</dbReference>
<dbReference type="SMR" id="Q6BUQ2"/>
<dbReference type="FunCoup" id="Q6BUQ2">
    <property type="interactions" value="375"/>
</dbReference>
<dbReference type="STRING" id="284592.Q6BUQ2"/>
<dbReference type="GeneID" id="2900469"/>
<dbReference type="KEGG" id="dha:DEHA2C08976g"/>
<dbReference type="VEuPathDB" id="FungiDB:DEHA2C08976g"/>
<dbReference type="eggNOG" id="KOG0162">
    <property type="taxonomic scope" value="Eukaryota"/>
</dbReference>
<dbReference type="HOGENOM" id="CLU_000192_7_6_1"/>
<dbReference type="InParanoid" id="Q6BUQ2"/>
<dbReference type="OMA" id="PPEEYQM"/>
<dbReference type="OrthoDB" id="6108017at2759"/>
<dbReference type="Proteomes" id="UP000000599">
    <property type="component" value="Chromosome C"/>
</dbReference>
<dbReference type="GO" id="GO:0030479">
    <property type="term" value="C:actin cortical patch"/>
    <property type="evidence" value="ECO:0007669"/>
    <property type="project" value="UniProtKB-SubCell"/>
</dbReference>
<dbReference type="GO" id="GO:0051285">
    <property type="term" value="C:cell cortex of cell tip"/>
    <property type="evidence" value="ECO:0007669"/>
    <property type="project" value="EnsemblFungi"/>
</dbReference>
<dbReference type="GO" id="GO:0043332">
    <property type="term" value="C:mating projection tip"/>
    <property type="evidence" value="ECO:0007669"/>
    <property type="project" value="EnsemblFungi"/>
</dbReference>
<dbReference type="GO" id="GO:0031097">
    <property type="term" value="C:medial cortex"/>
    <property type="evidence" value="ECO:0007669"/>
    <property type="project" value="EnsemblFungi"/>
</dbReference>
<dbReference type="GO" id="GO:0045160">
    <property type="term" value="C:myosin I complex"/>
    <property type="evidence" value="ECO:0007669"/>
    <property type="project" value="EnsemblFungi"/>
</dbReference>
<dbReference type="GO" id="GO:0044853">
    <property type="term" value="C:plasma membrane raft"/>
    <property type="evidence" value="ECO:0007669"/>
    <property type="project" value="EnsemblFungi"/>
</dbReference>
<dbReference type="GO" id="GO:0005628">
    <property type="term" value="C:prospore membrane"/>
    <property type="evidence" value="ECO:0007669"/>
    <property type="project" value="EnsemblFungi"/>
</dbReference>
<dbReference type="GO" id="GO:0051015">
    <property type="term" value="F:actin filament binding"/>
    <property type="evidence" value="ECO:0007669"/>
    <property type="project" value="EnsemblFungi"/>
</dbReference>
<dbReference type="GO" id="GO:0071933">
    <property type="term" value="F:Arp2/3 complex binding"/>
    <property type="evidence" value="ECO:0007669"/>
    <property type="project" value="EnsemblFungi"/>
</dbReference>
<dbReference type="GO" id="GO:0005524">
    <property type="term" value="F:ATP binding"/>
    <property type="evidence" value="ECO:0007669"/>
    <property type="project" value="UniProtKB-KW"/>
</dbReference>
<dbReference type="GO" id="GO:0016787">
    <property type="term" value="F:hydrolase activity"/>
    <property type="evidence" value="ECO:0007669"/>
    <property type="project" value="UniProtKB-KW"/>
</dbReference>
<dbReference type="GO" id="GO:0000146">
    <property type="term" value="F:microfilament motor activity"/>
    <property type="evidence" value="ECO:0007669"/>
    <property type="project" value="EnsemblFungi"/>
</dbReference>
<dbReference type="GO" id="GO:0000147">
    <property type="term" value="P:actin cortical patch assembly"/>
    <property type="evidence" value="ECO:0007669"/>
    <property type="project" value="EnsemblFungi"/>
</dbReference>
<dbReference type="GO" id="GO:0051666">
    <property type="term" value="P:actin cortical patch localization"/>
    <property type="evidence" value="ECO:0007669"/>
    <property type="project" value="TreeGrafter"/>
</dbReference>
<dbReference type="GO" id="GO:0007015">
    <property type="term" value="P:actin filament organization"/>
    <property type="evidence" value="ECO:0007669"/>
    <property type="project" value="TreeGrafter"/>
</dbReference>
<dbReference type="GO" id="GO:0006897">
    <property type="term" value="P:endocytosis"/>
    <property type="evidence" value="ECO:0007669"/>
    <property type="project" value="EnsemblFungi"/>
</dbReference>
<dbReference type="GO" id="GO:0000281">
    <property type="term" value="P:mitotic cytokinesis"/>
    <property type="evidence" value="ECO:0007669"/>
    <property type="project" value="EnsemblFungi"/>
</dbReference>
<dbReference type="CDD" id="cd01378">
    <property type="entry name" value="MYSc_Myo1"/>
    <property type="match status" value="1"/>
</dbReference>
<dbReference type="CDD" id="cd11858">
    <property type="entry name" value="SH3_Myosin-I_fungi"/>
    <property type="match status" value="1"/>
</dbReference>
<dbReference type="FunFam" id="1.10.10.820:FF:000001">
    <property type="entry name" value="Myosin heavy chain"/>
    <property type="match status" value="1"/>
</dbReference>
<dbReference type="FunFam" id="1.20.120.720:FF:000015">
    <property type="entry name" value="Myosin I"/>
    <property type="match status" value="1"/>
</dbReference>
<dbReference type="FunFam" id="1.20.5.4820:FF:000004">
    <property type="entry name" value="Myosin IE"/>
    <property type="match status" value="1"/>
</dbReference>
<dbReference type="FunFam" id="1.20.58.530:FF:000007">
    <property type="entry name" value="Myosin IE"/>
    <property type="match status" value="1"/>
</dbReference>
<dbReference type="Gene3D" id="1.10.10.820">
    <property type="match status" value="1"/>
</dbReference>
<dbReference type="Gene3D" id="1.20.5.4820">
    <property type="match status" value="1"/>
</dbReference>
<dbReference type="Gene3D" id="1.20.58.530">
    <property type="match status" value="1"/>
</dbReference>
<dbReference type="Gene3D" id="3.40.850.10">
    <property type="entry name" value="Kinesin motor domain"/>
    <property type="match status" value="1"/>
</dbReference>
<dbReference type="Gene3D" id="1.20.120.720">
    <property type="entry name" value="Myosin VI head, motor domain, U50 subdomain"/>
    <property type="match status" value="1"/>
</dbReference>
<dbReference type="Gene3D" id="2.30.30.40">
    <property type="entry name" value="SH3 Domains"/>
    <property type="match status" value="1"/>
</dbReference>
<dbReference type="InterPro" id="IPR035535">
    <property type="entry name" value="Fungal_myosin-I_SH3"/>
</dbReference>
<dbReference type="InterPro" id="IPR036961">
    <property type="entry name" value="Kinesin_motor_dom_sf"/>
</dbReference>
<dbReference type="InterPro" id="IPR001609">
    <property type="entry name" value="Myosin_head_motor_dom-like"/>
</dbReference>
<dbReference type="InterPro" id="IPR010926">
    <property type="entry name" value="Myosin_TH1"/>
</dbReference>
<dbReference type="InterPro" id="IPR036072">
    <property type="entry name" value="MYSc_Myo1"/>
</dbReference>
<dbReference type="InterPro" id="IPR027417">
    <property type="entry name" value="P-loop_NTPase"/>
</dbReference>
<dbReference type="InterPro" id="IPR036028">
    <property type="entry name" value="SH3-like_dom_sf"/>
</dbReference>
<dbReference type="InterPro" id="IPR001452">
    <property type="entry name" value="SH3_domain"/>
</dbReference>
<dbReference type="PANTHER" id="PTHR13140">
    <property type="entry name" value="MYOSIN"/>
    <property type="match status" value="1"/>
</dbReference>
<dbReference type="PANTHER" id="PTHR13140:SF837">
    <property type="entry name" value="MYOSIN-3-RELATED"/>
    <property type="match status" value="1"/>
</dbReference>
<dbReference type="Pfam" id="PF00063">
    <property type="entry name" value="Myosin_head"/>
    <property type="match status" value="1"/>
</dbReference>
<dbReference type="Pfam" id="PF06017">
    <property type="entry name" value="Myosin_TH1"/>
    <property type="match status" value="1"/>
</dbReference>
<dbReference type="Pfam" id="PF00018">
    <property type="entry name" value="SH3_1"/>
    <property type="match status" value="1"/>
</dbReference>
<dbReference type="PRINTS" id="PR00193">
    <property type="entry name" value="MYOSINHEAVY"/>
</dbReference>
<dbReference type="SMART" id="SM00242">
    <property type="entry name" value="MYSc"/>
    <property type="match status" value="1"/>
</dbReference>
<dbReference type="SMART" id="SM00326">
    <property type="entry name" value="SH3"/>
    <property type="match status" value="1"/>
</dbReference>
<dbReference type="SUPFAM" id="SSF52540">
    <property type="entry name" value="P-loop containing nucleoside triphosphate hydrolases"/>
    <property type="match status" value="1"/>
</dbReference>
<dbReference type="SUPFAM" id="SSF50044">
    <property type="entry name" value="SH3-domain"/>
    <property type="match status" value="1"/>
</dbReference>
<dbReference type="PROSITE" id="PS51456">
    <property type="entry name" value="MYOSIN_MOTOR"/>
    <property type="match status" value="1"/>
</dbReference>
<dbReference type="PROSITE" id="PS50002">
    <property type="entry name" value="SH3"/>
    <property type="match status" value="1"/>
</dbReference>
<dbReference type="PROSITE" id="PS51757">
    <property type="entry name" value="TH1"/>
    <property type="match status" value="1"/>
</dbReference>
<gene>
    <name type="primary">MYO1</name>
    <name type="ordered locus">DEHA2C08976g</name>
</gene>
<accession>Q6BUQ2</accession>
<sequence>MAIVKRGVRTKNKQSQQPSKSGIKKAEFDLHKKKEVGVSDLTLLSKIADDAINDNLYKRFMNSTIYTYIGHVLISVNPFEDLGIYTPEHLNKYKGKNRLEVPPHVFAIAESMYYNLKSYGDNQCVIISGESGAGKTEAAKQIMQYIANVSVDDQVSAGGDGGISKIKDMVLATNPLLESFGCAKTLRNNNSSRHGKYLEIYFNPSNYQPVSAHITNYLLEKQRVVSQITNERNFHIFYQFTKHCPPQYQQSFGIQGPETYVYTSAAKCINVDGVDDSKDLQDTLRAMQVIGLSQDEQDNIFRMLASILWVGNVSFVEDDNGNAAVRDESVTAFIAYLLDVDAETLKTSLIQRVMQTSHGMRRGSTYHVPLNIVQATSVRDALAKGIYNNLFDWIVERVNLSLQGSGAVQEKKSIGILDIYGFEIFEHNSFEQICINYVNEKLQQTFIQLTLKAEQDEYVQEQIKWTPIDYFNNKVVCDLIEALRPQPGLFAALNDSVKTAHADSDAADQVFAQRLSMVGANNAHFEDRRGKFIIKHYAGDVTYDVAGMTDKNKDSMLRDLVEVLSTSSNSFVSQVLFPPDLLAALTDSKKRPETASDKIKKSANLLVDTLSQCQPSYIRTIKPNQTKRPKEYDNNQVLHQIKYLGLKENVRIRRAGFAYRTTFDKFVQRFYLLSPKTGYAGDYIWQGDDVTAVHEILRSCHIPDSEYQMGTTKVFIKTPETLFALEDMRDKYWHNMAARIQRAWRRYIKRKDDAARLIQSAWKNKTHGNQFEQLRDYGNGLLHGRKERRRMSMLGSRAFMGDYLGCKYSSGFGRFIMSQAGISDSVIFSAKGDILLSKFGRSSKRLSRIFILTKNSLYVIAQTLVQNRLQVQKEFTIPVSGINYVGLSIYQDNWVAVSLHSPTPTTPDIFINLDFKTELVTHLKKCNPGLNIKIGQTIEYQKKPGKFHTIKFIVGNTAPVNGDSYKSGTVTVRQGLPGNSQNPKRPRGAAGKVDYSKYYNRGSNMRSTSSYQPPAVSKAPQSSRPSYIQPPVQQTQQRVVPPVQSQPKPQAQRYAPPDTQPQTQRHAPPDTQPHAHPEQAAQAAQAAFHHTAPQAQNTTQRKVPPSAPGSYGQQAPTQKPSAPSRPARKTAPAPPAKKNVAPPPPPAAASPPPKPKFPTYKAAYDFQGTGSASELPISKETIVFITRKEDNGWWLAKTLDETKEGWVPAAYVVECDPPANSPAGNAKSPPPPPPQLNSASQAQQSQQQAQAPNGAGLSNGLADALKAKKSEETNLAGSLADALKKRKGATGDSDEEDEEDDDDW</sequence>
<organism>
    <name type="scientific">Debaryomyces hansenii (strain ATCC 36239 / CBS 767 / BCRC 21394 / JCM 1990 / NBRC 0083 / IGC 2968)</name>
    <name type="common">Yeast</name>
    <name type="synonym">Torulaspora hansenii</name>
    <dbReference type="NCBI Taxonomy" id="284592"/>
    <lineage>
        <taxon>Eukaryota</taxon>
        <taxon>Fungi</taxon>
        <taxon>Dikarya</taxon>
        <taxon>Ascomycota</taxon>
        <taxon>Saccharomycotina</taxon>
        <taxon>Pichiomycetes</taxon>
        <taxon>Debaryomycetaceae</taxon>
        <taxon>Debaryomyces</taxon>
    </lineage>
</organism>
<keyword id="KW-0009">Actin-binding</keyword>
<keyword id="KW-0067">ATP-binding</keyword>
<keyword id="KW-0963">Cytoplasm</keyword>
<keyword id="KW-0206">Cytoskeleton</keyword>
<keyword id="KW-0378">Hydrolase</keyword>
<keyword id="KW-0505">Motor protein</keyword>
<keyword id="KW-0518">Myosin</keyword>
<keyword id="KW-0547">Nucleotide-binding</keyword>
<keyword id="KW-0597">Phosphoprotein</keyword>
<keyword id="KW-1185">Reference proteome</keyword>
<keyword id="KW-0677">Repeat</keyword>
<keyword id="KW-0728">SH3 domain</keyword>
<protein>
    <recommendedName>
        <fullName>Myosin-1</fullName>
    </recommendedName>
    <alternativeName>
        <fullName>Class I unconventional myosin</fullName>
    </alternativeName>
    <alternativeName>
        <fullName>Type I myosin</fullName>
    </alternativeName>
</protein>